<dbReference type="EC" id="2.7.7.27" evidence="1"/>
<dbReference type="EMBL" id="AE000512">
    <property type="protein sequence ID" value="AAD35331.1"/>
    <property type="molecule type" value="Genomic_DNA"/>
</dbReference>
<dbReference type="PIR" id="B72403">
    <property type="entry name" value="B72403"/>
</dbReference>
<dbReference type="RefSeq" id="NP_228054.1">
    <property type="nucleotide sequence ID" value="NC_000853.1"/>
</dbReference>
<dbReference type="RefSeq" id="WP_004082942.1">
    <property type="nucleotide sequence ID" value="NC_000853.1"/>
</dbReference>
<dbReference type="SMR" id="Q9WY82"/>
<dbReference type="FunCoup" id="Q9WY82">
    <property type="interactions" value="130"/>
</dbReference>
<dbReference type="STRING" id="243274.TM_0240"/>
<dbReference type="PaxDb" id="243274-THEMA_03525"/>
<dbReference type="EnsemblBacteria" id="AAD35331">
    <property type="protein sequence ID" value="AAD35331"/>
    <property type="gene ID" value="TM_0240"/>
</dbReference>
<dbReference type="KEGG" id="tma:TM0240"/>
<dbReference type="KEGG" id="tmi:THEMA_03525"/>
<dbReference type="KEGG" id="tmm:Tmari_0238"/>
<dbReference type="KEGG" id="tmw:THMA_0247"/>
<dbReference type="eggNOG" id="COG0448">
    <property type="taxonomic scope" value="Bacteria"/>
</dbReference>
<dbReference type="InParanoid" id="Q9WY82"/>
<dbReference type="OrthoDB" id="9801810at2"/>
<dbReference type="UniPathway" id="UPA00164"/>
<dbReference type="Proteomes" id="UP000008183">
    <property type="component" value="Chromosome"/>
</dbReference>
<dbReference type="GO" id="GO:0005524">
    <property type="term" value="F:ATP binding"/>
    <property type="evidence" value="ECO:0007669"/>
    <property type="project" value="UniProtKB-KW"/>
</dbReference>
<dbReference type="GO" id="GO:0008878">
    <property type="term" value="F:glucose-1-phosphate adenylyltransferase activity"/>
    <property type="evidence" value="ECO:0007669"/>
    <property type="project" value="UniProtKB-UniRule"/>
</dbReference>
<dbReference type="GO" id="GO:0005978">
    <property type="term" value="P:glycogen biosynthetic process"/>
    <property type="evidence" value="ECO:0007669"/>
    <property type="project" value="UniProtKB-UniRule"/>
</dbReference>
<dbReference type="CDD" id="cd02508">
    <property type="entry name" value="ADP_Glucose_PP"/>
    <property type="match status" value="1"/>
</dbReference>
<dbReference type="CDD" id="cd04651">
    <property type="entry name" value="LbH_G1P_AT_C"/>
    <property type="match status" value="1"/>
</dbReference>
<dbReference type="Gene3D" id="2.160.10.10">
    <property type="entry name" value="Hexapeptide repeat proteins"/>
    <property type="match status" value="1"/>
</dbReference>
<dbReference type="Gene3D" id="3.90.550.10">
    <property type="entry name" value="Spore Coat Polysaccharide Biosynthesis Protein SpsA, Chain A"/>
    <property type="match status" value="1"/>
</dbReference>
<dbReference type="HAMAP" id="MF_00624">
    <property type="entry name" value="GlgC"/>
    <property type="match status" value="1"/>
</dbReference>
<dbReference type="InterPro" id="IPR011831">
    <property type="entry name" value="ADP-Glc_PPase"/>
</dbReference>
<dbReference type="InterPro" id="IPR005836">
    <property type="entry name" value="ADP_Glu_pyroP_CS"/>
</dbReference>
<dbReference type="InterPro" id="IPR023049">
    <property type="entry name" value="GlgC_bac"/>
</dbReference>
<dbReference type="InterPro" id="IPR056818">
    <property type="entry name" value="GlmU/GlgC-like_hexapep"/>
</dbReference>
<dbReference type="InterPro" id="IPR005835">
    <property type="entry name" value="NTP_transferase_dom"/>
</dbReference>
<dbReference type="InterPro" id="IPR029044">
    <property type="entry name" value="Nucleotide-diphossugar_trans"/>
</dbReference>
<dbReference type="InterPro" id="IPR011004">
    <property type="entry name" value="Trimer_LpxA-like_sf"/>
</dbReference>
<dbReference type="NCBIfam" id="TIGR02091">
    <property type="entry name" value="glgC"/>
    <property type="match status" value="1"/>
</dbReference>
<dbReference type="NCBIfam" id="NF003670">
    <property type="entry name" value="PRK05293.1"/>
    <property type="match status" value="1"/>
</dbReference>
<dbReference type="PANTHER" id="PTHR43523:SF2">
    <property type="entry name" value="GLUCOSE-1-PHOSPHATE ADENYLYLTRANSFERASE"/>
    <property type="match status" value="1"/>
</dbReference>
<dbReference type="PANTHER" id="PTHR43523">
    <property type="entry name" value="GLUCOSE-1-PHOSPHATE ADENYLYLTRANSFERASE-RELATED"/>
    <property type="match status" value="1"/>
</dbReference>
<dbReference type="Pfam" id="PF24894">
    <property type="entry name" value="Hexapep_GlmU"/>
    <property type="match status" value="1"/>
</dbReference>
<dbReference type="Pfam" id="PF00483">
    <property type="entry name" value="NTP_transferase"/>
    <property type="match status" value="1"/>
</dbReference>
<dbReference type="SUPFAM" id="SSF53448">
    <property type="entry name" value="Nucleotide-diphospho-sugar transferases"/>
    <property type="match status" value="1"/>
</dbReference>
<dbReference type="SUPFAM" id="SSF51161">
    <property type="entry name" value="Trimeric LpxA-like enzymes"/>
    <property type="match status" value="1"/>
</dbReference>
<dbReference type="PROSITE" id="PS00808">
    <property type="entry name" value="ADP_GLC_PYROPHOSPH_1"/>
    <property type="match status" value="1"/>
</dbReference>
<dbReference type="PROSITE" id="PS00809">
    <property type="entry name" value="ADP_GLC_PYROPHOSPH_2"/>
    <property type="match status" value="1"/>
</dbReference>
<reference key="1">
    <citation type="journal article" date="1999" name="Nature">
        <title>Evidence for lateral gene transfer between Archaea and Bacteria from genome sequence of Thermotoga maritima.</title>
        <authorList>
            <person name="Nelson K.E."/>
            <person name="Clayton R.A."/>
            <person name="Gill S.R."/>
            <person name="Gwinn M.L."/>
            <person name="Dodson R.J."/>
            <person name="Haft D.H."/>
            <person name="Hickey E.K."/>
            <person name="Peterson J.D."/>
            <person name="Nelson W.C."/>
            <person name="Ketchum K.A."/>
            <person name="McDonald L.A."/>
            <person name="Utterback T.R."/>
            <person name="Malek J.A."/>
            <person name="Linher K.D."/>
            <person name="Garrett M.M."/>
            <person name="Stewart A.M."/>
            <person name="Cotton M.D."/>
            <person name="Pratt M.S."/>
            <person name="Phillips C.A."/>
            <person name="Richardson D.L."/>
            <person name="Heidelberg J.F."/>
            <person name="Sutton G.G."/>
            <person name="Fleischmann R.D."/>
            <person name="Eisen J.A."/>
            <person name="White O."/>
            <person name="Salzberg S.L."/>
            <person name="Smith H.O."/>
            <person name="Venter J.C."/>
            <person name="Fraser C.M."/>
        </authorList>
    </citation>
    <scope>NUCLEOTIDE SEQUENCE [LARGE SCALE GENOMIC DNA]</scope>
    <source>
        <strain>ATCC 43589 / DSM 3109 / JCM 10099 / NBRC 100826 / MSB8</strain>
    </source>
</reference>
<sequence length="423" mass="47139">MGNTVAMILAGGQGTRLGVLTERIAKPAVPFGGKYRLIDFTLSNCVNSGIYRVGVLTQYRPHVLSKHIGIGRPWDLDRKDGGVEILPPYVGRHESDWYKGTANAVYQNLEFLEENDAELVLILSGDHVYAMNYNDLIDYHLLKEADGTIACMEVPIEEASRFGIMITDVDGRIVDFEEKPAKPRSNLASLGIYVFNYEFLKKVLIEDENDPNSSHDFGKDVIPRILRENLGSLYAFRFDGYWRDVGTLRSYWEANLELVLPVPPFNLYDPNWRFFTHTEEMPPAYVAPGSKVSTSLVSEGAEVYGNVFNSVIFQGVKIGRGTVVKNSVIMTRTEIGENCYLENVIIAENVKIGSNVRMGVGEDAESKLDPKVYSGLLTVVGMNSVIPDDMVIGKNCVIGIGVRPEDFKSKTLESGDYVIVREE</sequence>
<keyword id="KW-0067">ATP-binding</keyword>
<keyword id="KW-0119">Carbohydrate metabolism</keyword>
<keyword id="KW-0320">Glycogen biosynthesis</keyword>
<keyword id="KW-0321">Glycogen metabolism</keyword>
<keyword id="KW-0547">Nucleotide-binding</keyword>
<keyword id="KW-0548">Nucleotidyltransferase</keyword>
<keyword id="KW-1185">Reference proteome</keyword>
<keyword id="KW-0808">Transferase</keyword>
<comment type="function">
    <text evidence="1">Involved in the biosynthesis of ADP-glucose, a building block required for the elongation reactions to produce glycogen. Catalyzes the reaction between ATP and alpha-D-glucose 1-phosphate (G1P) to produce pyrophosphate and ADP-Glc.</text>
</comment>
<comment type="catalytic activity">
    <reaction evidence="1">
        <text>alpha-D-glucose 1-phosphate + ATP + H(+) = ADP-alpha-D-glucose + diphosphate</text>
        <dbReference type="Rhea" id="RHEA:12120"/>
        <dbReference type="ChEBI" id="CHEBI:15378"/>
        <dbReference type="ChEBI" id="CHEBI:30616"/>
        <dbReference type="ChEBI" id="CHEBI:33019"/>
        <dbReference type="ChEBI" id="CHEBI:57498"/>
        <dbReference type="ChEBI" id="CHEBI:58601"/>
        <dbReference type="EC" id="2.7.7.27"/>
    </reaction>
</comment>
<comment type="pathway">
    <text evidence="1">Glycan biosynthesis; glycogen biosynthesis.</text>
</comment>
<comment type="subunit">
    <text evidence="1">Homotetramer.</text>
</comment>
<comment type="similarity">
    <text evidence="1">Belongs to the bacterial/plant glucose-1-phosphate adenylyltransferase family.</text>
</comment>
<evidence type="ECO:0000255" key="1">
    <source>
        <dbReference type="HAMAP-Rule" id="MF_00624"/>
    </source>
</evidence>
<gene>
    <name evidence="1" type="primary">glgC</name>
    <name type="ordered locus">TM_0240</name>
</gene>
<proteinExistence type="inferred from homology"/>
<accession>Q9WY82</accession>
<protein>
    <recommendedName>
        <fullName evidence="1">Glucose-1-phosphate adenylyltransferase</fullName>
        <ecNumber evidence="1">2.7.7.27</ecNumber>
    </recommendedName>
    <alternativeName>
        <fullName evidence="1">ADP-glucose pyrophosphorylase</fullName>
        <shortName evidence="1">ADPGlc PPase</shortName>
    </alternativeName>
    <alternativeName>
        <fullName evidence="1">ADP-glucose synthase</fullName>
    </alternativeName>
</protein>
<organism>
    <name type="scientific">Thermotoga maritima (strain ATCC 43589 / DSM 3109 / JCM 10099 / NBRC 100826 / MSB8)</name>
    <dbReference type="NCBI Taxonomy" id="243274"/>
    <lineage>
        <taxon>Bacteria</taxon>
        <taxon>Thermotogati</taxon>
        <taxon>Thermotogota</taxon>
        <taxon>Thermotogae</taxon>
        <taxon>Thermotogales</taxon>
        <taxon>Thermotogaceae</taxon>
        <taxon>Thermotoga</taxon>
    </lineage>
</organism>
<feature type="chain" id="PRO_0000195340" description="Glucose-1-phosphate adenylyltransferase">
    <location>
        <begin position="1"/>
        <end position="423"/>
    </location>
</feature>
<feature type="binding site" evidence="1">
    <location>
        <position position="98"/>
    </location>
    <ligand>
        <name>alpha-D-glucose 1-phosphate</name>
        <dbReference type="ChEBI" id="CHEBI:58601"/>
    </ligand>
</feature>
<feature type="binding site" evidence="1">
    <location>
        <position position="163"/>
    </location>
    <ligand>
        <name>alpha-D-glucose 1-phosphate</name>
        <dbReference type="ChEBI" id="CHEBI:58601"/>
    </ligand>
</feature>
<feature type="binding site" evidence="1">
    <location>
        <begin position="178"/>
        <end position="179"/>
    </location>
    <ligand>
        <name>alpha-D-glucose 1-phosphate</name>
        <dbReference type="ChEBI" id="CHEBI:58601"/>
    </ligand>
</feature>
<feature type="binding site" evidence="1">
    <location>
        <position position="189"/>
    </location>
    <ligand>
        <name>alpha-D-glucose 1-phosphate</name>
        <dbReference type="ChEBI" id="CHEBI:58601"/>
    </ligand>
</feature>
<name>GLGC_THEMA</name>